<dbReference type="EMBL" id="AC009917">
    <property type="protein sequence ID" value="AAF19754.1"/>
    <property type="status" value="ALT_SEQ"/>
    <property type="molecule type" value="Genomic_DNA"/>
</dbReference>
<dbReference type="EMBL" id="CP002684">
    <property type="protein sequence ID" value="AEE31234.1"/>
    <property type="molecule type" value="Genomic_DNA"/>
</dbReference>
<dbReference type="EMBL" id="BT004274">
    <property type="protein sequence ID" value="AAO42275.1"/>
    <property type="molecule type" value="mRNA"/>
</dbReference>
<dbReference type="EMBL" id="BT005561">
    <property type="protein sequence ID" value="AAO63981.1"/>
    <property type="molecule type" value="mRNA"/>
</dbReference>
<dbReference type="PIR" id="A86430">
    <property type="entry name" value="A86430"/>
</dbReference>
<dbReference type="RefSeq" id="NP_849733.1">
    <molecule id="Q84JP1-1"/>
    <property type="nucleotide sequence ID" value="NM_179402.4"/>
</dbReference>
<dbReference type="SMR" id="Q84JP1"/>
<dbReference type="BioGRID" id="25164">
    <property type="interactions" value="23"/>
</dbReference>
<dbReference type="FunCoup" id="Q84JP1">
    <property type="interactions" value="13"/>
</dbReference>
<dbReference type="IntAct" id="Q84JP1">
    <property type="interactions" value="18"/>
</dbReference>
<dbReference type="STRING" id="3702.Q84JP1"/>
<dbReference type="PaxDb" id="3702-AT1G30500.2"/>
<dbReference type="EnsemblPlants" id="AT1G30500.2">
    <molecule id="Q84JP1-1"/>
    <property type="protein sequence ID" value="AT1G30500.2"/>
    <property type="gene ID" value="AT1G30500"/>
</dbReference>
<dbReference type="GeneID" id="839929"/>
<dbReference type="Gramene" id="AT1G30500.2">
    <molecule id="Q84JP1-1"/>
    <property type="protein sequence ID" value="AT1G30500.2"/>
    <property type="gene ID" value="AT1G30500"/>
</dbReference>
<dbReference type="KEGG" id="ath:AT1G30500"/>
<dbReference type="Araport" id="AT1G30500"/>
<dbReference type="TAIR" id="AT1G30500">
    <property type="gene designation" value="NF-YA7"/>
</dbReference>
<dbReference type="eggNOG" id="KOG1561">
    <property type="taxonomic scope" value="Eukaryota"/>
</dbReference>
<dbReference type="InParanoid" id="Q84JP1"/>
<dbReference type="OMA" id="HHEGNHL"/>
<dbReference type="PhylomeDB" id="Q84JP1"/>
<dbReference type="PRO" id="PR:Q84JP1"/>
<dbReference type="Proteomes" id="UP000006548">
    <property type="component" value="Chromosome 1"/>
</dbReference>
<dbReference type="ExpressionAtlas" id="Q84JP1">
    <property type="expression patterns" value="baseline and differential"/>
</dbReference>
<dbReference type="GO" id="GO:0005634">
    <property type="term" value="C:nucleus"/>
    <property type="evidence" value="ECO:0007669"/>
    <property type="project" value="UniProtKB-SubCell"/>
</dbReference>
<dbReference type="GO" id="GO:0003677">
    <property type="term" value="F:DNA binding"/>
    <property type="evidence" value="ECO:0007669"/>
    <property type="project" value="UniProtKB-KW"/>
</dbReference>
<dbReference type="GO" id="GO:0003700">
    <property type="term" value="F:DNA-binding transcription factor activity"/>
    <property type="evidence" value="ECO:0000250"/>
    <property type="project" value="TAIR"/>
</dbReference>
<dbReference type="GO" id="GO:0045892">
    <property type="term" value="P:negative regulation of DNA-templated transcription"/>
    <property type="evidence" value="ECO:0000314"/>
    <property type="project" value="TAIR"/>
</dbReference>
<dbReference type="Gene3D" id="6.10.250.2430">
    <property type="match status" value="1"/>
</dbReference>
<dbReference type="InterPro" id="IPR001289">
    <property type="entry name" value="NFYA"/>
</dbReference>
<dbReference type="PANTHER" id="PTHR12632">
    <property type="entry name" value="TRANSCRIPTION FACTOR NF-Y ALPHA-RELATED"/>
    <property type="match status" value="1"/>
</dbReference>
<dbReference type="Pfam" id="PF02045">
    <property type="entry name" value="CBFB_NFYA"/>
    <property type="match status" value="1"/>
</dbReference>
<dbReference type="PRINTS" id="PR00616">
    <property type="entry name" value="CCAATSUBUNTB"/>
</dbReference>
<dbReference type="SMART" id="SM00521">
    <property type="entry name" value="CBF"/>
    <property type="match status" value="1"/>
</dbReference>
<dbReference type="PROSITE" id="PS51152">
    <property type="entry name" value="NFYA_HAP2_2"/>
    <property type="match status" value="1"/>
</dbReference>
<comment type="function">
    <text evidence="1">Stimulates the transcription of various genes by recognizing and binding to a CCAAT motif in promoters.</text>
</comment>
<comment type="subunit">
    <text evidence="1">Heterotrimeric transcription factor composed of three components, NF-YA, NF-YB and NF-YC. NF-YB and NF-YC must interact and dimerize for NF-YA association and DNA binding (By similarity).</text>
</comment>
<comment type="interaction">
    <interactant intactId="EBI-4444640">
        <id>Q84JP1</id>
    </interactant>
    <interactant intactId="EBI-4448729">
        <id>Q9ZVC9</id>
        <label>FRS3</label>
    </interactant>
    <organismsDiffer>false</organismsDiffer>
    <experiments>3</experiments>
</comment>
<comment type="interaction">
    <interactant intactId="EBI-4444640">
        <id>Q84JP1</id>
    </interactant>
    <interactant intactId="EBI-632272">
        <id>O24410</id>
        <label>IAA20</label>
    </interactant>
    <organismsDiffer>false</organismsDiffer>
    <experiments>3</experiments>
</comment>
<comment type="interaction">
    <interactant intactId="EBI-4444640">
        <id>Q84JP1</id>
    </interactant>
    <interactant intactId="EBI-632216">
        <id>Q38827</id>
        <label>IAA9</label>
    </interactant>
    <organismsDiffer>false</organismsDiffer>
    <experiments>3</experiments>
</comment>
<comment type="interaction">
    <interactant intactId="EBI-4444640">
        <id>Q84JP1</id>
    </interactant>
    <interactant intactId="EBI-530486">
        <id>P46639</id>
        <label>KNAT1</label>
    </interactant>
    <organismsDiffer>false</organismsDiffer>
    <experiments>3</experiments>
</comment>
<comment type="interaction">
    <interactant intactId="EBI-4444640">
        <id>Q84JP1</id>
    </interactant>
    <interactant intactId="EBI-541115">
        <id>Q9FNZ4</id>
        <label>NIMIN-3</label>
    </interactant>
    <organismsDiffer>false</organismsDiffer>
    <experiments>3</experiments>
</comment>
<comment type="subcellular location">
    <subcellularLocation>
        <location evidence="4">Nucleus</location>
    </subcellularLocation>
</comment>
<comment type="alternative products">
    <event type="alternative splicing"/>
    <isoform>
        <id>Q84JP1-1</id>
        <name>1</name>
        <sequence type="displayed"/>
    </isoform>
    <isoform>
        <id>Q84JP1-2</id>
        <name>2</name>
        <sequence type="described" ref="VSP_016047"/>
    </isoform>
</comment>
<comment type="miscellaneous">
    <molecule>Isoform 2</molecule>
    <text evidence="4">May be due to a competing acceptor splice site.</text>
</comment>
<comment type="similarity">
    <text evidence="2">Belongs to the NFYA/HAP2 subunit family.</text>
</comment>
<comment type="sequence caution" evidence="4">
    <conflict type="erroneous gene model prediction">
        <sequence resource="EMBL-CDS" id="AAF19754"/>
    </conflict>
</comment>
<name>NFYA7_ARATH</name>
<organism>
    <name type="scientific">Arabidopsis thaliana</name>
    <name type="common">Mouse-ear cress</name>
    <dbReference type="NCBI Taxonomy" id="3702"/>
    <lineage>
        <taxon>Eukaryota</taxon>
        <taxon>Viridiplantae</taxon>
        <taxon>Streptophyta</taxon>
        <taxon>Embryophyta</taxon>
        <taxon>Tracheophyta</taxon>
        <taxon>Spermatophyta</taxon>
        <taxon>Magnoliopsida</taxon>
        <taxon>eudicotyledons</taxon>
        <taxon>Gunneridae</taxon>
        <taxon>Pentapetalae</taxon>
        <taxon>rosids</taxon>
        <taxon>malvids</taxon>
        <taxon>Brassicales</taxon>
        <taxon>Brassicaceae</taxon>
        <taxon>Camelineae</taxon>
        <taxon>Arabidopsis</taxon>
    </lineage>
</organism>
<gene>
    <name type="primary">NFYA7</name>
    <name type="ordered locus">At1g30500</name>
    <name type="ORF">F26G16.12</name>
</gene>
<keyword id="KW-0010">Activator</keyword>
<keyword id="KW-0025">Alternative splicing</keyword>
<keyword id="KW-0238">DNA-binding</keyword>
<keyword id="KW-0539">Nucleus</keyword>
<keyword id="KW-1185">Reference proteome</keyword>
<keyword id="KW-0804">Transcription</keyword>
<keyword id="KW-0805">Transcription regulation</keyword>
<reference key="1">
    <citation type="journal article" date="2000" name="Nature">
        <title>Sequence and analysis of chromosome 1 of the plant Arabidopsis thaliana.</title>
        <authorList>
            <person name="Theologis A."/>
            <person name="Ecker J.R."/>
            <person name="Palm C.J."/>
            <person name="Federspiel N.A."/>
            <person name="Kaul S."/>
            <person name="White O."/>
            <person name="Alonso J."/>
            <person name="Altafi H."/>
            <person name="Araujo R."/>
            <person name="Bowman C.L."/>
            <person name="Brooks S.Y."/>
            <person name="Buehler E."/>
            <person name="Chan A."/>
            <person name="Chao Q."/>
            <person name="Chen H."/>
            <person name="Cheuk R.F."/>
            <person name="Chin C.W."/>
            <person name="Chung M.K."/>
            <person name="Conn L."/>
            <person name="Conway A.B."/>
            <person name="Conway A.R."/>
            <person name="Creasy T.H."/>
            <person name="Dewar K."/>
            <person name="Dunn P."/>
            <person name="Etgu P."/>
            <person name="Feldblyum T.V."/>
            <person name="Feng J.-D."/>
            <person name="Fong B."/>
            <person name="Fujii C.Y."/>
            <person name="Gill J.E."/>
            <person name="Goldsmith A.D."/>
            <person name="Haas B."/>
            <person name="Hansen N.F."/>
            <person name="Hughes B."/>
            <person name="Huizar L."/>
            <person name="Hunter J.L."/>
            <person name="Jenkins J."/>
            <person name="Johnson-Hopson C."/>
            <person name="Khan S."/>
            <person name="Khaykin E."/>
            <person name="Kim C.J."/>
            <person name="Koo H.L."/>
            <person name="Kremenetskaia I."/>
            <person name="Kurtz D.B."/>
            <person name="Kwan A."/>
            <person name="Lam B."/>
            <person name="Langin-Hooper S."/>
            <person name="Lee A."/>
            <person name="Lee J.M."/>
            <person name="Lenz C.A."/>
            <person name="Li J.H."/>
            <person name="Li Y.-P."/>
            <person name="Lin X."/>
            <person name="Liu S.X."/>
            <person name="Liu Z.A."/>
            <person name="Luros J.S."/>
            <person name="Maiti R."/>
            <person name="Marziali A."/>
            <person name="Militscher J."/>
            <person name="Miranda M."/>
            <person name="Nguyen M."/>
            <person name="Nierman W.C."/>
            <person name="Osborne B.I."/>
            <person name="Pai G."/>
            <person name="Peterson J."/>
            <person name="Pham P.K."/>
            <person name="Rizzo M."/>
            <person name="Rooney T."/>
            <person name="Rowley D."/>
            <person name="Sakano H."/>
            <person name="Salzberg S.L."/>
            <person name="Schwartz J.R."/>
            <person name="Shinn P."/>
            <person name="Southwick A.M."/>
            <person name="Sun H."/>
            <person name="Tallon L.J."/>
            <person name="Tambunga G."/>
            <person name="Toriumi M.J."/>
            <person name="Town C.D."/>
            <person name="Utterback T."/>
            <person name="Van Aken S."/>
            <person name="Vaysberg M."/>
            <person name="Vysotskaia V.S."/>
            <person name="Walker M."/>
            <person name="Wu D."/>
            <person name="Yu G."/>
            <person name="Fraser C.M."/>
            <person name="Venter J.C."/>
            <person name="Davis R.W."/>
        </authorList>
    </citation>
    <scope>NUCLEOTIDE SEQUENCE [LARGE SCALE GENOMIC DNA]</scope>
    <source>
        <strain>cv. Columbia</strain>
    </source>
</reference>
<reference key="2">
    <citation type="journal article" date="2017" name="Plant J.">
        <title>Araport11: a complete reannotation of the Arabidopsis thaliana reference genome.</title>
        <authorList>
            <person name="Cheng C.Y."/>
            <person name="Krishnakumar V."/>
            <person name="Chan A.P."/>
            <person name="Thibaud-Nissen F."/>
            <person name="Schobel S."/>
            <person name="Town C.D."/>
        </authorList>
    </citation>
    <scope>GENOME REANNOTATION</scope>
    <source>
        <strain>cv. Columbia</strain>
    </source>
</reference>
<reference key="3">
    <citation type="journal article" date="2003" name="Science">
        <title>Empirical analysis of transcriptional activity in the Arabidopsis genome.</title>
        <authorList>
            <person name="Yamada K."/>
            <person name="Lim J."/>
            <person name="Dale J.M."/>
            <person name="Chen H."/>
            <person name="Shinn P."/>
            <person name="Palm C.J."/>
            <person name="Southwick A.M."/>
            <person name="Wu H.C."/>
            <person name="Kim C.J."/>
            <person name="Nguyen M."/>
            <person name="Pham P.K."/>
            <person name="Cheuk R.F."/>
            <person name="Karlin-Newmann G."/>
            <person name="Liu S.X."/>
            <person name="Lam B."/>
            <person name="Sakano H."/>
            <person name="Wu T."/>
            <person name="Yu G."/>
            <person name="Miranda M."/>
            <person name="Quach H.L."/>
            <person name="Tripp M."/>
            <person name="Chang C.H."/>
            <person name="Lee J.M."/>
            <person name="Toriumi M.J."/>
            <person name="Chan M.M."/>
            <person name="Tang C.C."/>
            <person name="Onodera C.S."/>
            <person name="Deng J.M."/>
            <person name="Akiyama K."/>
            <person name="Ansari Y."/>
            <person name="Arakawa T."/>
            <person name="Banh J."/>
            <person name="Banno F."/>
            <person name="Bowser L."/>
            <person name="Brooks S.Y."/>
            <person name="Carninci P."/>
            <person name="Chao Q."/>
            <person name="Choy N."/>
            <person name="Enju A."/>
            <person name="Goldsmith A.D."/>
            <person name="Gurjal M."/>
            <person name="Hansen N.F."/>
            <person name="Hayashizaki Y."/>
            <person name="Johnson-Hopson C."/>
            <person name="Hsuan V.W."/>
            <person name="Iida K."/>
            <person name="Karnes M."/>
            <person name="Khan S."/>
            <person name="Koesema E."/>
            <person name="Ishida J."/>
            <person name="Jiang P.X."/>
            <person name="Jones T."/>
            <person name="Kawai J."/>
            <person name="Kamiya A."/>
            <person name="Meyers C."/>
            <person name="Nakajima M."/>
            <person name="Narusaka M."/>
            <person name="Seki M."/>
            <person name="Sakurai T."/>
            <person name="Satou M."/>
            <person name="Tamse R."/>
            <person name="Vaysberg M."/>
            <person name="Wallender E.K."/>
            <person name="Wong C."/>
            <person name="Yamamura Y."/>
            <person name="Yuan S."/>
            <person name="Shinozaki K."/>
            <person name="Davis R.W."/>
            <person name="Theologis A."/>
            <person name="Ecker J.R."/>
        </authorList>
    </citation>
    <scope>NUCLEOTIDE SEQUENCE [LARGE SCALE MRNA] (ISOFORM 1)</scope>
    <source>
        <strain>cv. Columbia</strain>
    </source>
</reference>
<reference key="4">
    <citation type="journal article" date="2002" name="Gene">
        <title>Regulation of novel members of the Arabidopsis thaliana CCAAT-binding nuclear factor Y subunits.</title>
        <authorList>
            <person name="Gusmaroli G."/>
            <person name="Tonelli C."/>
            <person name="Mantovani R."/>
        </authorList>
    </citation>
    <scope>GENE FAMILY</scope>
    <scope>NOMENCLATURE</scope>
</reference>
<feature type="chain" id="PRO_0000198777" description="Nuclear transcription factor Y subunit A-7">
    <location>
        <begin position="1"/>
        <end position="190"/>
    </location>
</feature>
<feature type="DNA-binding region" description="NFYA/HAP2-type" evidence="2">
    <location>
        <begin position="133"/>
        <end position="158"/>
    </location>
</feature>
<feature type="region of interest" description="Disordered" evidence="3">
    <location>
        <begin position="1"/>
        <end position="33"/>
    </location>
</feature>
<feature type="region of interest" description="Disordered" evidence="3">
    <location>
        <begin position="147"/>
        <end position="190"/>
    </location>
</feature>
<feature type="short sequence motif" description="Subunit association domain (SAD)">
    <location>
        <begin position="103"/>
        <end position="126"/>
    </location>
</feature>
<feature type="compositionally biased region" description="Basic and acidic residues" evidence="3">
    <location>
        <begin position="7"/>
        <end position="24"/>
    </location>
</feature>
<feature type="compositionally biased region" description="Basic and acidic residues" evidence="3">
    <location>
        <begin position="158"/>
        <end position="174"/>
    </location>
</feature>
<feature type="compositionally biased region" description="Low complexity" evidence="3">
    <location>
        <begin position="177"/>
        <end position="190"/>
    </location>
</feature>
<feature type="splice variant" id="VSP_016047" description="In isoform 2." evidence="4">
    <location>
        <begin position="78"/>
        <end position="81"/>
    </location>
</feature>
<sequence length="190" mass="21300">MTSSIHELSDNIGSHEKQEQRDSHFQPPIPSARNYESIVTSLVYSDPGTTNSMAPGQYPYPDPYYRSIFAPPPQPYTGVHLQLMGVQQQGVPLPSDAVEEPVFVNAKQYHGILRRRQSRARLESQNKVIKSRKPYLHESRHLHAIRRPRGCGGRFLNAKKEDEHHEDSSHEEKSNLSAGKSAMAASSGTS</sequence>
<protein>
    <recommendedName>
        <fullName>Nuclear transcription factor Y subunit A-7</fullName>
        <shortName>AtNF-YA-7</shortName>
    </recommendedName>
</protein>
<accession>Q84JP1</accession>
<accession>Q9S9P9</accession>
<proteinExistence type="evidence at protein level"/>
<evidence type="ECO:0000250" key="1"/>
<evidence type="ECO:0000255" key="2">
    <source>
        <dbReference type="PROSITE-ProRule" id="PRU00966"/>
    </source>
</evidence>
<evidence type="ECO:0000256" key="3">
    <source>
        <dbReference type="SAM" id="MobiDB-lite"/>
    </source>
</evidence>
<evidence type="ECO:0000305" key="4"/>